<proteinExistence type="inferred from homology"/>
<feature type="chain" id="PRO_0000151402" description="Putative ketol-acid reductoisomerase 3">
    <location>
        <begin position="1"/>
        <end position="332"/>
    </location>
</feature>
<feature type="domain" description="KARI N-terminal Rossmann" evidence="1">
    <location>
        <begin position="1"/>
        <end position="182"/>
    </location>
</feature>
<feature type="domain" description="KARI C-terminal knotted" evidence="2">
    <location>
        <begin position="183"/>
        <end position="329"/>
    </location>
</feature>
<name>ILVC3_SACS2</name>
<protein>
    <recommendedName>
        <fullName>Putative ketol-acid reductoisomerase 3</fullName>
        <ecNumber>1.1.1.86</ecNumber>
    </recommendedName>
    <alternativeName>
        <fullName>Acetohydroxy-acid isomeroreductase 3</fullName>
    </alternativeName>
    <alternativeName>
        <fullName>Alpha-keto-beta-hydroxylacyl reductoisomerase 3</fullName>
    </alternativeName>
</protein>
<keyword id="KW-0028">Amino-acid biosynthesis</keyword>
<keyword id="KW-0100">Branched-chain amino acid biosynthesis</keyword>
<keyword id="KW-0521">NADP</keyword>
<keyword id="KW-0560">Oxidoreductase</keyword>
<keyword id="KW-1185">Reference proteome</keyword>
<accession>Q97X13</accession>
<evidence type="ECO:0000255" key="1">
    <source>
        <dbReference type="PROSITE-ProRule" id="PRU01197"/>
    </source>
</evidence>
<evidence type="ECO:0000255" key="2">
    <source>
        <dbReference type="PROSITE-ProRule" id="PRU01198"/>
    </source>
</evidence>
<evidence type="ECO:0000305" key="3"/>
<sequence>MDKTVLDASLEPLKGKTIAVIGYGNQGRVQANIMRENGLNVIIGNVKDRYYDLAIKEGFEVYDIGEAVKKADVAFLLIPDEIMKEIYEKKIAPILEGKKEFVLDFASGYNVAFGLIRPPKNVDTVMVAPRMVGEGIMDLHKQGKGYPVLLGVKQDASGKAWDYAKAIAKGIGAIPGGIAVISSFEEEALLDLMSEHTWVPILFGAIKACFDVAVKEYGVSPEAALLEFYASGELVEIARLIAEEGIFNQMVHHSTTSQYGTLTRMFKYYDLVKEIVKDEAKYIWDGSFAKEWTLEQQAGYPVFYRLWELAVQSEMAKAEKELYKILRRKVSD</sequence>
<comment type="catalytic activity">
    <reaction>
        <text>(2R)-2,3-dihydroxy-3-methylbutanoate + NADP(+) = (2S)-2-acetolactate + NADPH + H(+)</text>
        <dbReference type="Rhea" id="RHEA:22068"/>
        <dbReference type="ChEBI" id="CHEBI:15378"/>
        <dbReference type="ChEBI" id="CHEBI:49072"/>
        <dbReference type="ChEBI" id="CHEBI:57783"/>
        <dbReference type="ChEBI" id="CHEBI:58349"/>
        <dbReference type="ChEBI" id="CHEBI:58476"/>
        <dbReference type="EC" id="1.1.1.86"/>
    </reaction>
</comment>
<comment type="catalytic activity">
    <reaction>
        <text>(2R,3R)-2,3-dihydroxy-3-methylpentanoate + NADP(+) = (S)-2-ethyl-2-hydroxy-3-oxobutanoate + NADPH + H(+)</text>
        <dbReference type="Rhea" id="RHEA:13493"/>
        <dbReference type="ChEBI" id="CHEBI:15378"/>
        <dbReference type="ChEBI" id="CHEBI:49256"/>
        <dbReference type="ChEBI" id="CHEBI:49258"/>
        <dbReference type="ChEBI" id="CHEBI:57783"/>
        <dbReference type="ChEBI" id="CHEBI:58349"/>
        <dbReference type="EC" id="1.1.1.86"/>
    </reaction>
</comment>
<comment type="pathway">
    <text>Amino-acid biosynthesis; L-isoleucine biosynthesis; L-isoleucine from 2-oxobutanoate: step 2/4.</text>
</comment>
<comment type="pathway">
    <text>Amino-acid biosynthesis; L-valine biosynthesis; L-valine from pyruvate: step 2/4.</text>
</comment>
<comment type="similarity">
    <text evidence="3">Belongs to the ketol-acid reductoisomerase family.</text>
</comment>
<comment type="caution">
    <text evidence="3">Ser-107 is present instead of the conserved His which is expected to be an active site residue.</text>
</comment>
<organism>
    <name type="scientific">Saccharolobus solfataricus (strain ATCC 35092 / DSM 1617 / JCM 11322 / P2)</name>
    <name type="common">Sulfolobus solfataricus</name>
    <dbReference type="NCBI Taxonomy" id="273057"/>
    <lineage>
        <taxon>Archaea</taxon>
        <taxon>Thermoproteota</taxon>
        <taxon>Thermoprotei</taxon>
        <taxon>Sulfolobales</taxon>
        <taxon>Sulfolobaceae</taxon>
        <taxon>Saccharolobus</taxon>
    </lineage>
</organism>
<dbReference type="EC" id="1.1.1.86"/>
<dbReference type="EMBL" id="AE006641">
    <property type="protein sequence ID" value="AAK42136.1"/>
    <property type="molecule type" value="Genomic_DNA"/>
</dbReference>
<dbReference type="PIR" id="A90360">
    <property type="entry name" value="A90360"/>
</dbReference>
<dbReference type="SMR" id="Q97X13"/>
<dbReference type="FunCoup" id="Q97X13">
    <property type="interactions" value="97"/>
</dbReference>
<dbReference type="STRING" id="273057.SSO1942"/>
<dbReference type="PaxDb" id="273057-SSO1942"/>
<dbReference type="EnsemblBacteria" id="AAK42136">
    <property type="protein sequence ID" value="AAK42136"/>
    <property type="gene ID" value="SSO1942"/>
</dbReference>
<dbReference type="KEGG" id="sso:SSO1942"/>
<dbReference type="PATRIC" id="fig|273057.12.peg.2016"/>
<dbReference type="eggNOG" id="arCOG04465">
    <property type="taxonomic scope" value="Archaea"/>
</dbReference>
<dbReference type="HOGENOM" id="CLU_033821_0_0_2"/>
<dbReference type="InParanoid" id="Q97X13"/>
<dbReference type="PhylomeDB" id="Q97X13"/>
<dbReference type="UniPathway" id="UPA00047">
    <property type="reaction ID" value="UER00056"/>
</dbReference>
<dbReference type="UniPathway" id="UPA00049">
    <property type="reaction ID" value="UER00060"/>
</dbReference>
<dbReference type="Proteomes" id="UP000001974">
    <property type="component" value="Chromosome"/>
</dbReference>
<dbReference type="GO" id="GO:0004455">
    <property type="term" value="F:ketol-acid reductoisomerase activity"/>
    <property type="evidence" value="ECO:0000318"/>
    <property type="project" value="GO_Central"/>
</dbReference>
<dbReference type="GO" id="GO:0009097">
    <property type="term" value="P:isoleucine biosynthetic process"/>
    <property type="evidence" value="ECO:0000318"/>
    <property type="project" value="GO_Central"/>
</dbReference>
<dbReference type="GO" id="GO:0009099">
    <property type="term" value="P:L-valine biosynthetic process"/>
    <property type="evidence" value="ECO:0000318"/>
    <property type="project" value="GO_Central"/>
</dbReference>
<dbReference type="Gene3D" id="6.10.240.10">
    <property type="match status" value="1"/>
</dbReference>
<dbReference type="Gene3D" id="3.40.50.720">
    <property type="entry name" value="NAD(P)-binding Rossmann-like Domain"/>
    <property type="match status" value="1"/>
</dbReference>
<dbReference type="InterPro" id="IPR008927">
    <property type="entry name" value="6-PGluconate_DH-like_C_sf"/>
</dbReference>
<dbReference type="InterPro" id="IPR013023">
    <property type="entry name" value="KARI"/>
</dbReference>
<dbReference type="InterPro" id="IPR000506">
    <property type="entry name" value="KARI_C"/>
</dbReference>
<dbReference type="InterPro" id="IPR013116">
    <property type="entry name" value="KARI_N"/>
</dbReference>
<dbReference type="InterPro" id="IPR036291">
    <property type="entry name" value="NAD(P)-bd_dom_sf"/>
</dbReference>
<dbReference type="NCBIfam" id="TIGR00465">
    <property type="entry name" value="ilvC"/>
    <property type="match status" value="1"/>
</dbReference>
<dbReference type="PANTHER" id="PTHR21371">
    <property type="entry name" value="KETOL-ACID REDUCTOISOMERASE, MITOCHONDRIAL"/>
    <property type="match status" value="1"/>
</dbReference>
<dbReference type="PANTHER" id="PTHR21371:SF1">
    <property type="entry name" value="KETOL-ACID REDUCTOISOMERASE, MITOCHONDRIAL"/>
    <property type="match status" value="1"/>
</dbReference>
<dbReference type="Pfam" id="PF01450">
    <property type="entry name" value="KARI_C"/>
    <property type="match status" value="1"/>
</dbReference>
<dbReference type="Pfam" id="PF07991">
    <property type="entry name" value="KARI_N"/>
    <property type="match status" value="1"/>
</dbReference>
<dbReference type="SUPFAM" id="SSF48179">
    <property type="entry name" value="6-phosphogluconate dehydrogenase C-terminal domain-like"/>
    <property type="match status" value="1"/>
</dbReference>
<dbReference type="SUPFAM" id="SSF51735">
    <property type="entry name" value="NAD(P)-binding Rossmann-fold domains"/>
    <property type="match status" value="1"/>
</dbReference>
<dbReference type="PROSITE" id="PS51851">
    <property type="entry name" value="KARI_C"/>
    <property type="match status" value="1"/>
</dbReference>
<dbReference type="PROSITE" id="PS51850">
    <property type="entry name" value="KARI_N"/>
    <property type="match status" value="1"/>
</dbReference>
<gene>
    <name type="primary">ilvC3</name>
    <name type="synonym">ilvC-3</name>
    <name type="ordered locus">SSO1942</name>
</gene>
<reference key="1">
    <citation type="journal article" date="2001" name="Proc. Natl. Acad. Sci. U.S.A.">
        <title>The complete genome of the crenarchaeon Sulfolobus solfataricus P2.</title>
        <authorList>
            <person name="She Q."/>
            <person name="Singh R.K."/>
            <person name="Confalonieri F."/>
            <person name="Zivanovic Y."/>
            <person name="Allard G."/>
            <person name="Awayez M.J."/>
            <person name="Chan-Weiher C.C.-Y."/>
            <person name="Clausen I.G."/>
            <person name="Curtis B.A."/>
            <person name="De Moors A."/>
            <person name="Erauso G."/>
            <person name="Fletcher C."/>
            <person name="Gordon P.M.K."/>
            <person name="Heikamp-de Jong I."/>
            <person name="Jeffries A.C."/>
            <person name="Kozera C.J."/>
            <person name="Medina N."/>
            <person name="Peng X."/>
            <person name="Thi-Ngoc H.P."/>
            <person name="Redder P."/>
            <person name="Schenk M.E."/>
            <person name="Theriault C."/>
            <person name="Tolstrup N."/>
            <person name="Charlebois R.L."/>
            <person name="Doolittle W.F."/>
            <person name="Duguet M."/>
            <person name="Gaasterland T."/>
            <person name="Garrett R.A."/>
            <person name="Ragan M.A."/>
            <person name="Sensen C.W."/>
            <person name="Van der Oost J."/>
        </authorList>
    </citation>
    <scope>NUCLEOTIDE SEQUENCE [LARGE SCALE GENOMIC DNA]</scope>
    <source>
        <strain>ATCC 35092 / DSM 1617 / JCM 11322 / P2</strain>
    </source>
</reference>